<feature type="chain" id="PRO_0000352364" description="Inosose dehydratase">
    <location>
        <begin position="1"/>
        <end position="297"/>
    </location>
</feature>
<comment type="function">
    <text evidence="1">Catalyzes the dehydration of inosose (2-keto-myo-inositol, 2KMI or 2,4,6/3,5-pentahydroxycyclohexanone) to 3D-(3,5/4)-trihydroxycyclohexane-1,2-dione (D-2,3-diketo-4-deoxy-epi-inositol).</text>
</comment>
<comment type="catalytic activity">
    <reaction evidence="1">
        <text>scyllo-inosose = 3D-3,5/4-trihydroxycyclohexane-1,2-dione + H2O</text>
        <dbReference type="Rhea" id="RHEA:14065"/>
        <dbReference type="ChEBI" id="CHEBI:15377"/>
        <dbReference type="ChEBI" id="CHEBI:17811"/>
        <dbReference type="ChEBI" id="CHEBI:28446"/>
        <dbReference type="EC" id="4.2.1.44"/>
    </reaction>
</comment>
<comment type="cofactor">
    <cofactor evidence="1">
        <name>glutathione</name>
        <dbReference type="ChEBI" id="CHEBI:57925"/>
    </cofactor>
</comment>
<comment type="cofactor">
    <cofactor evidence="1">
        <name>Co(2+)</name>
        <dbReference type="ChEBI" id="CHEBI:48828"/>
    </cofactor>
    <cofactor evidence="1">
        <name>Mn(2+)</name>
        <dbReference type="ChEBI" id="CHEBI:29035"/>
    </cofactor>
</comment>
<comment type="pathway">
    <text evidence="1">Polyol metabolism; myo-inositol degradation into acetyl-CoA; acetyl-CoA from myo-inositol: step 2/7.</text>
</comment>
<comment type="similarity">
    <text evidence="1">Belongs to the IolE/MocC family.</text>
</comment>
<reference key="1">
    <citation type="journal article" date="2002" name="Proc. Natl. Acad. Sci. U.S.A.">
        <title>Complete genome sequence of Clostridium perfringens, an anaerobic flesh-eater.</title>
        <authorList>
            <person name="Shimizu T."/>
            <person name="Ohtani K."/>
            <person name="Hirakawa H."/>
            <person name="Ohshima K."/>
            <person name="Yamashita A."/>
            <person name="Shiba T."/>
            <person name="Ogasawara N."/>
            <person name="Hattori M."/>
            <person name="Kuhara S."/>
            <person name="Hayashi H."/>
        </authorList>
    </citation>
    <scope>NUCLEOTIDE SEQUENCE [LARGE SCALE GENOMIC DNA]</scope>
    <source>
        <strain>13 / Type A</strain>
    </source>
</reference>
<name>IOLE_CLOPE</name>
<sequence>MFNSNVKLGIAPIAWTNDDMPDLGKENTFEQCISEMALAGFKGSEVGNKYPRDVEVLKKALELRDMEIASAWFSAFLTTKPYEETEKAFIEHRDFLNAMGAKVIVVSEQGHSIQGQMETPIFDGKYVLNEEEWKTLAEGLNKLGALAKEKGMKLVYHHHMGTVVQTTEEIDKLMDLTDENLVYLLFDSGHLVYSGEDALEVLKKYVNRVKHVHLKDIRKKKVEEVKRDKLSFLQGVRKGAFTVPGDGDIDFEPIFKVLDDNNYEGYLLVEAEQDPAIANPLEYAIKARKYIKEKTNL</sequence>
<protein>
    <recommendedName>
        <fullName evidence="1">Inosose dehydratase</fullName>
        <ecNumber evidence="1">4.2.1.44</ecNumber>
    </recommendedName>
    <alternativeName>
        <fullName evidence="1">2-keto-myo-inositol dehydratase</fullName>
        <shortName evidence="1">2KMI dehydratase</shortName>
    </alternativeName>
</protein>
<keyword id="KW-0170">Cobalt</keyword>
<keyword id="KW-0456">Lyase</keyword>
<keyword id="KW-0464">Manganese</keyword>
<keyword id="KW-1185">Reference proteome</keyword>
<accession>Q8XP74</accession>
<organism>
    <name type="scientific">Clostridium perfringens (strain 13 / Type A)</name>
    <dbReference type="NCBI Taxonomy" id="195102"/>
    <lineage>
        <taxon>Bacteria</taxon>
        <taxon>Bacillati</taxon>
        <taxon>Bacillota</taxon>
        <taxon>Clostridia</taxon>
        <taxon>Eubacteriales</taxon>
        <taxon>Clostridiaceae</taxon>
        <taxon>Clostridium</taxon>
    </lineage>
</organism>
<gene>
    <name evidence="1" type="primary">iolE</name>
    <name type="ordered locus">CPE0091</name>
</gene>
<proteinExistence type="inferred from homology"/>
<dbReference type="EC" id="4.2.1.44" evidence="1"/>
<dbReference type="EMBL" id="BA000016">
    <property type="protein sequence ID" value="BAB79797.1"/>
    <property type="molecule type" value="Genomic_DNA"/>
</dbReference>
<dbReference type="RefSeq" id="WP_003470045.1">
    <property type="nucleotide sequence ID" value="NC_003366.1"/>
</dbReference>
<dbReference type="SMR" id="Q8XP74"/>
<dbReference type="STRING" id="195102.gene:10489335"/>
<dbReference type="KEGG" id="cpe:CPE0091"/>
<dbReference type="HOGENOM" id="CLU_059523_0_0_9"/>
<dbReference type="UniPathway" id="UPA00076">
    <property type="reaction ID" value="UER00144"/>
</dbReference>
<dbReference type="Proteomes" id="UP000000818">
    <property type="component" value="Chromosome"/>
</dbReference>
<dbReference type="GO" id="GO:0030145">
    <property type="term" value="F:manganese ion binding"/>
    <property type="evidence" value="ECO:0007669"/>
    <property type="project" value="UniProtKB-UniRule"/>
</dbReference>
<dbReference type="GO" id="GO:0050114">
    <property type="term" value="F:myo-inosose-2 dehydratase activity"/>
    <property type="evidence" value="ECO:0007669"/>
    <property type="project" value="UniProtKB-UniRule"/>
</dbReference>
<dbReference type="GO" id="GO:0019310">
    <property type="term" value="P:inositol catabolic process"/>
    <property type="evidence" value="ECO:0007669"/>
    <property type="project" value="UniProtKB-UniRule"/>
</dbReference>
<dbReference type="Gene3D" id="3.20.20.150">
    <property type="entry name" value="Divalent-metal-dependent TIM barrel enzymes"/>
    <property type="match status" value="1"/>
</dbReference>
<dbReference type="HAMAP" id="MF_01672">
    <property type="entry name" value="IolE"/>
    <property type="match status" value="1"/>
</dbReference>
<dbReference type="InterPro" id="IPR023952">
    <property type="entry name" value="IolE"/>
</dbReference>
<dbReference type="InterPro" id="IPR030823">
    <property type="entry name" value="IolE/MocC"/>
</dbReference>
<dbReference type="InterPro" id="IPR050312">
    <property type="entry name" value="IolE/XylAMocC-like"/>
</dbReference>
<dbReference type="InterPro" id="IPR036237">
    <property type="entry name" value="Xyl_isomerase-like_sf"/>
</dbReference>
<dbReference type="InterPro" id="IPR013022">
    <property type="entry name" value="Xyl_isomerase-like_TIM-brl"/>
</dbReference>
<dbReference type="NCBIfam" id="TIGR04379">
    <property type="entry name" value="myo_inos_iolE"/>
    <property type="match status" value="1"/>
</dbReference>
<dbReference type="PANTHER" id="PTHR12110">
    <property type="entry name" value="HYDROXYPYRUVATE ISOMERASE"/>
    <property type="match status" value="1"/>
</dbReference>
<dbReference type="PANTHER" id="PTHR12110:SF41">
    <property type="entry name" value="INOSOSE DEHYDRATASE"/>
    <property type="match status" value="1"/>
</dbReference>
<dbReference type="Pfam" id="PF01261">
    <property type="entry name" value="AP_endonuc_2"/>
    <property type="match status" value="1"/>
</dbReference>
<dbReference type="SUPFAM" id="SSF51658">
    <property type="entry name" value="Xylose isomerase-like"/>
    <property type="match status" value="1"/>
</dbReference>
<evidence type="ECO:0000255" key="1">
    <source>
        <dbReference type="HAMAP-Rule" id="MF_01672"/>
    </source>
</evidence>